<sequence length="329" mass="35591">MNAAISATARYLPEGVLSNLDLERMLDTNDEWIRSRTGISERRILRDPKKATSYMCGEVASQLLRKRGLAAEELELIIVATMTPDMMFPSTACLVQDIIGAKNAWAFDINAACSGFLYALNTASQFIKAGTHKNVMVIGGDKMSSIIDYTDRSTAILFGDGAGGVILEAAESEGFGVLDARMYSDGTNGKDHLLMKGGGSLHPATHDTVDQHLHYIYQDGRMVFKSAVTSMADVAAEIMERNGLTSDDVSWLVPHQANQRIISATAERMGIDESKVISNVGRYGNTTAGTIPICLSELDDGGHLEHGSNLVLVSFGAGYTWGGVYVKWQ</sequence>
<dbReference type="EC" id="2.3.1.180" evidence="1"/>
<dbReference type="EMBL" id="CP000096">
    <property type="protein sequence ID" value="ABB23023.1"/>
    <property type="molecule type" value="Genomic_DNA"/>
</dbReference>
<dbReference type="RefSeq" id="WP_011356899.1">
    <property type="nucleotide sequence ID" value="NC_007512.1"/>
</dbReference>
<dbReference type="SMR" id="Q3B6K8"/>
<dbReference type="STRING" id="319225.Plut_0133"/>
<dbReference type="KEGG" id="plt:Plut_0133"/>
<dbReference type="eggNOG" id="COG0332">
    <property type="taxonomic scope" value="Bacteria"/>
</dbReference>
<dbReference type="HOGENOM" id="CLU_039592_3_1_10"/>
<dbReference type="OrthoDB" id="9815506at2"/>
<dbReference type="UniPathway" id="UPA00094"/>
<dbReference type="Proteomes" id="UP000002709">
    <property type="component" value="Chromosome"/>
</dbReference>
<dbReference type="GO" id="GO:0005737">
    <property type="term" value="C:cytoplasm"/>
    <property type="evidence" value="ECO:0007669"/>
    <property type="project" value="UniProtKB-SubCell"/>
</dbReference>
<dbReference type="GO" id="GO:0004315">
    <property type="term" value="F:3-oxoacyl-[acyl-carrier-protein] synthase activity"/>
    <property type="evidence" value="ECO:0007669"/>
    <property type="project" value="InterPro"/>
</dbReference>
<dbReference type="GO" id="GO:0033818">
    <property type="term" value="F:beta-ketoacyl-acyl-carrier-protein synthase III activity"/>
    <property type="evidence" value="ECO:0007669"/>
    <property type="project" value="UniProtKB-UniRule"/>
</dbReference>
<dbReference type="GO" id="GO:0006633">
    <property type="term" value="P:fatty acid biosynthetic process"/>
    <property type="evidence" value="ECO:0007669"/>
    <property type="project" value="UniProtKB-UniRule"/>
</dbReference>
<dbReference type="GO" id="GO:0044550">
    <property type="term" value="P:secondary metabolite biosynthetic process"/>
    <property type="evidence" value="ECO:0007669"/>
    <property type="project" value="TreeGrafter"/>
</dbReference>
<dbReference type="CDD" id="cd00830">
    <property type="entry name" value="KAS_III"/>
    <property type="match status" value="1"/>
</dbReference>
<dbReference type="FunFam" id="3.40.47.10:FF:000004">
    <property type="entry name" value="3-oxoacyl-[acyl-carrier-protein] synthase 3"/>
    <property type="match status" value="1"/>
</dbReference>
<dbReference type="Gene3D" id="3.40.47.10">
    <property type="match status" value="1"/>
</dbReference>
<dbReference type="HAMAP" id="MF_01815">
    <property type="entry name" value="FabH"/>
    <property type="match status" value="1"/>
</dbReference>
<dbReference type="InterPro" id="IPR013747">
    <property type="entry name" value="ACP_syn_III_C"/>
</dbReference>
<dbReference type="InterPro" id="IPR013751">
    <property type="entry name" value="ACP_syn_III_N"/>
</dbReference>
<dbReference type="InterPro" id="IPR004655">
    <property type="entry name" value="FabH"/>
</dbReference>
<dbReference type="InterPro" id="IPR016039">
    <property type="entry name" value="Thiolase-like"/>
</dbReference>
<dbReference type="NCBIfam" id="TIGR00747">
    <property type="entry name" value="fabH"/>
    <property type="match status" value="1"/>
</dbReference>
<dbReference type="NCBIfam" id="NF006829">
    <property type="entry name" value="PRK09352.1"/>
    <property type="match status" value="1"/>
</dbReference>
<dbReference type="PANTHER" id="PTHR34069">
    <property type="entry name" value="3-OXOACYL-[ACYL-CARRIER-PROTEIN] SYNTHASE 3"/>
    <property type="match status" value="1"/>
</dbReference>
<dbReference type="PANTHER" id="PTHR34069:SF2">
    <property type="entry name" value="BETA-KETOACYL-[ACYL-CARRIER-PROTEIN] SYNTHASE III"/>
    <property type="match status" value="1"/>
</dbReference>
<dbReference type="Pfam" id="PF08545">
    <property type="entry name" value="ACP_syn_III"/>
    <property type="match status" value="1"/>
</dbReference>
<dbReference type="Pfam" id="PF08541">
    <property type="entry name" value="ACP_syn_III_C"/>
    <property type="match status" value="1"/>
</dbReference>
<dbReference type="SUPFAM" id="SSF53901">
    <property type="entry name" value="Thiolase-like"/>
    <property type="match status" value="1"/>
</dbReference>
<comment type="function">
    <text evidence="1">Catalyzes the condensation reaction of fatty acid synthesis by the addition to an acyl acceptor of two carbons from malonyl-ACP. Catalyzes the first condensation reaction which initiates fatty acid synthesis and may therefore play a role in governing the total rate of fatty acid production. Possesses both acetoacetyl-ACP synthase and acetyl transacylase activities. Its substrate specificity determines the biosynthesis of branched-chain and/or straight-chain of fatty acids.</text>
</comment>
<comment type="catalytic activity">
    <reaction evidence="1">
        <text>malonyl-[ACP] + acetyl-CoA + H(+) = 3-oxobutanoyl-[ACP] + CO2 + CoA</text>
        <dbReference type="Rhea" id="RHEA:12080"/>
        <dbReference type="Rhea" id="RHEA-COMP:9623"/>
        <dbReference type="Rhea" id="RHEA-COMP:9625"/>
        <dbReference type="ChEBI" id="CHEBI:15378"/>
        <dbReference type="ChEBI" id="CHEBI:16526"/>
        <dbReference type="ChEBI" id="CHEBI:57287"/>
        <dbReference type="ChEBI" id="CHEBI:57288"/>
        <dbReference type="ChEBI" id="CHEBI:78449"/>
        <dbReference type="ChEBI" id="CHEBI:78450"/>
        <dbReference type="EC" id="2.3.1.180"/>
    </reaction>
</comment>
<comment type="pathway">
    <text evidence="1">Lipid metabolism; fatty acid biosynthesis.</text>
</comment>
<comment type="subunit">
    <text evidence="1">Homodimer.</text>
</comment>
<comment type="subcellular location">
    <subcellularLocation>
        <location evidence="1">Cytoplasm</location>
    </subcellularLocation>
</comment>
<comment type="domain">
    <text evidence="1">The last Arg residue of the ACP-binding site is essential for the weak association between ACP/AcpP and FabH.</text>
</comment>
<comment type="similarity">
    <text evidence="1">Belongs to the thiolase-like superfamily. FabH family.</text>
</comment>
<gene>
    <name evidence="1" type="primary">fabH</name>
    <name type="ordered locus">Plut_0133</name>
</gene>
<name>FABH_CHLL3</name>
<accession>Q3B6K8</accession>
<feature type="chain" id="PRO_1000056387" description="Beta-ketoacyl-[acyl-carrier-protein] synthase III">
    <location>
        <begin position="1"/>
        <end position="329"/>
    </location>
</feature>
<feature type="region of interest" description="ACP-binding" evidence="1">
    <location>
        <begin position="256"/>
        <end position="260"/>
    </location>
</feature>
<feature type="active site" evidence="1">
    <location>
        <position position="113"/>
    </location>
</feature>
<feature type="active site" evidence="1">
    <location>
        <position position="255"/>
    </location>
</feature>
<feature type="active site" evidence="1">
    <location>
        <position position="285"/>
    </location>
</feature>
<reference key="1">
    <citation type="submission" date="2005-08" db="EMBL/GenBank/DDBJ databases">
        <title>Complete sequence of Pelodictyon luteolum DSM 273.</title>
        <authorList>
            <consortium name="US DOE Joint Genome Institute"/>
            <person name="Copeland A."/>
            <person name="Lucas S."/>
            <person name="Lapidus A."/>
            <person name="Barry K."/>
            <person name="Detter J.C."/>
            <person name="Glavina T."/>
            <person name="Hammon N."/>
            <person name="Israni S."/>
            <person name="Pitluck S."/>
            <person name="Bryant D."/>
            <person name="Schmutz J."/>
            <person name="Larimer F."/>
            <person name="Land M."/>
            <person name="Kyrpides N."/>
            <person name="Ivanova N."/>
            <person name="Richardson P."/>
        </authorList>
    </citation>
    <scope>NUCLEOTIDE SEQUENCE [LARGE SCALE GENOMIC DNA]</scope>
    <source>
        <strain>DSM 273 / BCRC 81028 / 2530</strain>
    </source>
</reference>
<organism>
    <name type="scientific">Chlorobium luteolum (strain DSM 273 / BCRC 81028 / 2530)</name>
    <name type="common">Pelodictyon luteolum</name>
    <dbReference type="NCBI Taxonomy" id="319225"/>
    <lineage>
        <taxon>Bacteria</taxon>
        <taxon>Pseudomonadati</taxon>
        <taxon>Chlorobiota</taxon>
        <taxon>Chlorobiia</taxon>
        <taxon>Chlorobiales</taxon>
        <taxon>Chlorobiaceae</taxon>
        <taxon>Chlorobium/Pelodictyon group</taxon>
        <taxon>Pelodictyon</taxon>
    </lineage>
</organism>
<protein>
    <recommendedName>
        <fullName evidence="1">Beta-ketoacyl-[acyl-carrier-protein] synthase III</fullName>
        <shortName evidence="1">Beta-ketoacyl-ACP synthase III</shortName>
        <shortName evidence="1">KAS III</shortName>
        <ecNumber evidence="1">2.3.1.180</ecNumber>
    </recommendedName>
    <alternativeName>
        <fullName evidence="1">3-oxoacyl-[acyl-carrier-protein] synthase 3</fullName>
    </alternativeName>
    <alternativeName>
        <fullName evidence="1">3-oxoacyl-[acyl-carrier-protein] synthase III</fullName>
    </alternativeName>
</protein>
<proteinExistence type="inferred from homology"/>
<evidence type="ECO:0000255" key="1">
    <source>
        <dbReference type="HAMAP-Rule" id="MF_01815"/>
    </source>
</evidence>
<keyword id="KW-0012">Acyltransferase</keyword>
<keyword id="KW-0963">Cytoplasm</keyword>
<keyword id="KW-0275">Fatty acid biosynthesis</keyword>
<keyword id="KW-0276">Fatty acid metabolism</keyword>
<keyword id="KW-0444">Lipid biosynthesis</keyword>
<keyword id="KW-0443">Lipid metabolism</keyword>
<keyword id="KW-0511">Multifunctional enzyme</keyword>
<keyword id="KW-1185">Reference proteome</keyword>
<keyword id="KW-0808">Transferase</keyword>